<evidence type="ECO:0000255" key="1">
    <source>
        <dbReference type="HAMAP-Rule" id="MF_00457"/>
    </source>
</evidence>
<gene>
    <name type="ordered locus">BPUM_2573</name>
</gene>
<organism>
    <name type="scientific">Bacillus pumilus (strain SAFR-032)</name>
    <dbReference type="NCBI Taxonomy" id="315750"/>
    <lineage>
        <taxon>Bacteria</taxon>
        <taxon>Bacillati</taxon>
        <taxon>Bacillota</taxon>
        <taxon>Bacilli</taxon>
        <taxon>Bacillales</taxon>
        <taxon>Bacillaceae</taxon>
        <taxon>Bacillus</taxon>
    </lineage>
</organism>
<dbReference type="EMBL" id="CP000813">
    <property type="protein sequence ID" value="ABV63233.1"/>
    <property type="molecule type" value="Genomic_DNA"/>
</dbReference>
<dbReference type="RefSeq" id="WP_012010873.1">
    <property type="nucleotide sequence ID" value="NZ_VEIS01000006.1"/>
</dbReference>
<dbReference type="SMR" id="A8FG66"/>
<dbReference type="STRING" id="315750.BPUM_2573"/>
<dbReference type="GeneID" id="5621838"/>
<dbReference type="KEGG" id="bpu:BPUM_2573"/>
<dbReference type="eggNOG" id="COG2220">
    <property type="taxonomic scope" value="Bacteria"/>
</dbReference>
<dbReference type="HOGENOM" id="CLU_070010_4_1_9"/>
<dbReference type="OrthoDB" id="9789133at2"/>
<dbReference type="Proteomes" id="UP000001355">
    <property type="component" value="Chromosome"/>
</dbReference>
<dbReference type="GO" id="GO:0016787">
    <property type="term" value="F:hydrolase activity"/>
    <property type="evidence" value="ECO:0007669"/>
    <property type="project" value="UniProtKB-UniRule"/>
</dbReference>
<dbReference type="Gene3D" id="3.60.15.10">
    <property type="entry name" value="Ribonuclease Z/Hydroxyacylglutathione hydrolase-like"/>
    <property type="match status" value="1"/>
</dbReference>
<dbReference type="HAMAP" id="MF_00457">
    <property type="entry name" value="UPF0173"/>
    <property type="match status" value="1"/>
</dbReference>
<dbReference type="InterPro" id="IPR001279">
    <property type="entry name" value="Metallo-B-lactamas"/>
</dbReference>
<dbReference type="InterPro" id="IPR036866">
    <property type="entry name" value="RibonucZ/Hydroxyglut_hydro"/>
</dbReference>
<dbReference type="InterPro" id="IPR022877">
    <property type="entry name" value="UPF0173"/>
</dbReference>
<dbReference type="NCBIfam" id="NF001911">
    <property type="entry name" value="PRK00685.1"/>
    <property type="match status" value="1"/>
</dbReference>
<dbReference type="PANTHER" id="PTHR39189">
    <property type="entry name" value="UPF0173 METAL-DEPENDENT HYDROLASE YTKL"/>
    <property type="match status" value="1"/>
</dbReference>
<dbReference type="PANTHER" id="PTHR39189:SF1">
    <property type="entry name" value="UPF0173 METAL-DEPENDENT HYDROLASE YTKL"/>
    <property type="match status" value="1"/>
</dbReference>
<dbReference type="Pfam" id="PF12706">
    <property type="entry name" value="Lactamase_B_2"/>
    <property type="match status" value="1"/>
</dbReference>
<dbReference type="SMART" id="SM00849">
    <property type="entry name" value="Lactamase_B"/>
    <property type="match status" value="1"/>
</dbReference>
<dbReference type="SUPFAM" id="SSF56281">
    <property type="entry name" value="Metallo-hydrolase/oxidoreductase"/>
    <property type="match status" value="1"/>
</dbReference>
<protein>
    <recommendedName>
        <fullName evidence="1">UPF0173 metal-dependent hydrolase BPUM_2573</fullName>
    </recommendedName>
</protein>
<feature type="chain" id="PRO_1000060324" description="UPF0173 metal-dependent hydrolase BPUM_2573">
    <location>
        <begin position="1"/>
        <end position="227"/>
    </location>
</feature>
<name>Y2573_BACP2</name>
<reference key="1">
    <citation type="journal article" date="2007" name="PLoS ONE">
        <title>Paradoxical DNA repair and peroxide resistance gene conservation in Bacillus pumilus SAFR-032.</title>
        <authorList>
            <person name="Gioia J."/>
            <person name="Yerrapragada S."/>
            <person name="Qin X."/>
            <person name="Jiang H."/>
            <person name="Igboeli O.C."/>
            <person name="Muzny D."/>
            <person name="Dugan-Rocha S."/>
            <person name="Ding Y."/>
            <person name="Hawes A."/>
            <person name="Liu W."/>
            <person name="Perez L."/>
            <person name="Kovar C."/>
            <person name="Dinh H."/>
            <person name="Lee S."/>
            <person name="Nazareth L."/>
            <person name="Blyth P."/>
            <person name="Holder M."/>
            <person name="Buhay C."/>
            <person name="Tirumalai M.R."/>
            <person name="Liu Y."/>
            <person name="Dasgupta I."/>
            <person name="Bokhetache L."/>
            <person name="Fujita M."/>
            <person name="Karouia F."/>
            <person name="Eswara Moorthy P."/>
            <person name="Siefert J."/>
            <person name="Uzman A."/>
            <person name="Buzumbo P."/>
            <person name="Verma A."/>
            <person name="Zwiya H."/>
            <person name="McWilliams B.D."/>
            <person name="Olowu A."/>
            <person name="Clinkenbeard K.D."/>
            <person name="Newcombe D."/>
            <person name="Golebiewski L."/>
            <person name="Petrosino J.F."/>
            <person name="Nicholson W.L."/>
            <person name="Fox G.E."/>
            <person name="Venkateswaran K."/>
            <person name="Highlander S.K."/>
            <person name="Weinstock G.M."/>
        </authorList>
    </citation>
    <scope>NUCLEOTIDE SEQUENCE [LARGE SCALE GENOMIC DNA]</scope>
    <source>
        <strain>SAFR-032</strain>
    </source>
</reference>
<comment type="similarity">
    <text evidence="1">Belongs to the UPF0173 family.</text>
</comment>
<sequence length="227" mass="24765">MKATYHGHSVVHIETNGYHIWIDPFLNGNKHTDIKPQDVKADVILLTHGHGDHIGDTIEIAKNNDALVIAPFELATYLGWQGVKTHPLSIGGGREFEFGKVKLTQAFHGSAIIDEDAKTITYTGMPSGILFTAEGKTIYHAGDTALFSDMKLIGELNHIELAFLPIGDNFTMGPDDARIAAEWLRAKQVVPVHYSTFPPIEQDPHAFADSLHGGVGHVLNSGQSIEI</sequence>
<proteinExistence type="inferred from homology"/>
<keyword id="KW-0378">Hydrolase</keyword>
<accession>A8FG66</accession>